<keyword id="KW-0028">Amino-acid biosynthesis</keyword>
<keyword id="KW-0057">Aromatic amino acid biosynthesis</keyword>
<keyword id="KW-0413">Isomerase</keyword>
<keyword id="KW-0822">Tryptophan biosynthesis</keyword>
<proteinExistence type="inferred from homology"/>
<sequence length="213" mass="22721">MSTIVKICGLTTADTLEAAVETGADMVGFVFFPASPRHLDIDFADALGRQVRSRAAKVALTVDADDDLLDAIVEQLRPNWLQFHGSESPERVRSIKRIYGLPVMKAIAVAGPEDLSVLPDYAAVADRILFDARPPKDATRPGGLGAAFDWKLLDGVNLKLPFLVSGGINAGNVAEALRVTRAQGVDVSSGVETSPGEKDPDLIRDFIRAARAA</sequence>
<reference key="1">
    <citation type="submission" date="2008-05" db="EMBL/GenBank/DDBJ databases">
        <title>Complete sequence of Rhodopseudomonas palustris TIE-1.</title>
        <authorList>
            <consortium name="US DOE Joint Genome Institute"/>
            <person name="Lucas S."/>
            <person name="Copeland A."/>
            <person name="Lapidus A."/>
            <person name="Glavina del Rio T."/>
            <person name="Dalin E."/>
            <person name="Tice H."/>
            <person name="Pitluck S."/>
            <person name="Chain P."/>
            <person name="Malfatti S."/>
            <person name="Shin M."/>
            <person name="Vergez L."/>
            <person name="Lang D."/>
            <person name="Schmutz J."/>
            <person name="Larimer F."/>
            <person name="Land M."/>
            <person name="Hauser L."/>
            <person name="Kyrpides N."/>
            <person name="Mikhailova N."/>
            <person name="Emerson D."/>
            <person name="Newman D.K."/>
            <person name="Roden E."/>
            <person name="Richardson P."/>
        </authorList>
    </citation>
    <scope>NUCLEOTIDE SEQUENCE [LARGE SCALE GENOMIC DNA]</scope>
    <source>
        <strain>TIE-1</strain>
    </source>
</reference>
<protein>
    <recommendedName>
        <fullName evidence="1">N-(5'-phosphoribosyl)anthranilate isomerase</fullName>
        <shortName evidence="1">PRAI</shortName>
        <ecNumber evidence="1">5.3.1.24</ecNumber>
    </recommendedName>
</protein>
<feature type="chain" id="PRO_1000095937" description="N-(5'-phosphoribosyl)anthranilate isomerase">
    <location>
        <begin position="1"/>
        <end position="213"/>
    </location>
</feature>
<name>TRPF_RHOPT</name>
<organism>
    <name type="scientific">Rhodopseudomonas palustris (strain TIE-1)</name>
    <dbReference type="NCBI Taxonomy" id="395960"/>
    <lineage>
        <taxon>Bacteria</taxon>
        <taxon>Pseudomonadati</taxon>
        <taxon>Pseudomonadota</taxon>
        <taxon>Alphaproteobacteria</taxon>
        <taxon>Hyphomicrobiales</taxon>
        <taxon>Nitrobacteraceae</taxon>
        <taxon>Rhodopseudomonas</taxon>
    </lineage>
</organism>
<gene>
    <name evidence="1" type="primary">trpF</name>
    <name type="ordered locus">Rpal_0071</name>
</gene>
<dbReference type="EC" id="5.3.1.24" evidence="1"/>
<dbReference type="EMBL" id="CP001096">
    <property type="protein sequence ID" value="ACE98633.1"/>
    <property type="molecule type" value="Genomic_DNA"/>
</dbReference>
<dbReference type="RefSeq" id="WP_012493899.1">
    <property type="nucleotide sequence ID" value="NC_011004.1"/>
</dbReference>
<dbReference type="SMR" id="B3Q604"/>
<dbReference type="KEGG" id="rpt:Rpal_0071"/>
<dbReference type="HOGENOM" id="CLU_076364_1_1_5"/>
<dbReference type="OrthoDB" id="9796196at2"/>
<dbReference type="UniPathway" id="UPA00035">
    <property type="reaction ID" value="UER00042"/>
</dbReference>
<dbReference type="Proteomes" id="UP000001725">
    <property type="component" value="Chromosome"/>
</dbReference>
<dbReference type="GO" id="GO:0004640">
    <property type="term" value="F:phosphoribosylanthranilate isomerase activity"/>
    <property type="evidence" value="ECO:0007669"/>
    <property type="project" value="UniProtKB-UniRule"/>
</dbReference>
<dbReference type="GO" id="GO:0000162">
    <property type="term" value="P:L-tryptophan biosynthetic process"/>
    <property type="evidence" value="ECO:0007669"/>
    <property type="project" value="UniProtKB-UniRule"/>
</dbReference>
<dbReference type="CDD" id="cd00405">
    <property type="entry name" value="PRAI"/>
    <property type="match status" value="1"/>
</dbReference>
<dbReference type="Gene3D" id="3.20.20.70">
    <property type="entry name" value="Aldolase class I"/>
    <property type="match status" value="1"/>
</dbReference>
<dbReference type="HAMAP" id="MF_00135">
    <property type="entry name" value="PRAI"/>
    <property type="match status" value="1"/>
</dbReference>
<dbReference type="InterPro" id="IPR013785">
    <property type="entry name" value="Aldolase_TIM"/>
</dbReference>
<dbReference type="InterPro" id="IPR001240">
    <property type="entry name" value="PRAI_dom"/>
</dbReference>
<dbReference type="InterPro" id="IPR011060">
    <property type="entry name" value="RibuloseP-bd_barrel"/>
</dbReference>
<dbReference type="InterPro" id="IPR044643">
    <property type="entry name" value="TrpF_fam"/>
</dbReference>
<dbReference type="NCBIfam" id="NF002295">
    <property type="entry name" value="PRK01222.1-1"/>
    <property type="match status" value="1"/>
</dbReference>
<dbReference type="PANTHER" id="PTHR42894">
    <property type="entry name" value="N-(5'-PHOSPHORIBOSYL)ANTHRANILATE ISOMERASE"/>
    <property type="match status" value="1"/>
</dbReference>
<dbReference type="PANTHER" id="PTHR42894:SF1">
    <property type="entry name" value="N-(5'-PHOSPHORIBOSYL)ANTHRANILATE ISOMERASE"/>
    <property type="match status" value="1"/>
</dbReference>
<dbReference type="Pfam" id="PF00697">
    <property type="entry name" value="PRAI"/>
    <property type="match status" value="1"/>
</dbReference>
<dbReference type="SUPFAM" id="SSF51366">
    <property type="entry name" value="Ribulose-phoshate binding barrel"/>
    <property type="match status" value="1"/>
</dbReference>
<accession>B3Q604</accession>
<comment type="catalytic activity">
    <reaction evidence="1">
        <text>N-(5-phospho-beta-D-ribosyl)anthranilate = 1-(2-carboxyphenylamino)-1-deoxy-D-ribulose 5-phosphate</text>
        <dbReference type="Rhea" id="RHEA:21540"/>
        <dbReference type="ChEBI" id="CHEBI:18277"/>
        <dbReference type="ChEBI" id="CHEBI:58613"/>
        <dbReference type="EC" id="5.3.1.24"/>
    </reaction>
</comment>
<comment type="pathway">
    <text evidence="1">Amino-acid biosynthesis; L-tryptophan biosynthesis; L-tryptophan from chorismate: step 3/5.</text>
</comment>
<comment type="similarity">
    <text evidence="1">Belongs to the TrpF family.</text>
</comment>
<evidence type="ECO:0000255" key="1">
    <source>
        <dbReference type="HAMAP-Rule" id="MF_00135"/>
    </source>
</evidence>